<protein>
    <recommendedName>
        <fullName evidence="1">Small ribosomal subunit protein uS13</fullName>
    </recommendedName>
    <alternativeName>
        <fullName evidence="3">30S ribosomal protein S13</fullName>
    </alternativeName>
</protein>
<accession>B5ZZ55</accession>
<evidence type="ECO:0000255" key="1">
    <source>
        <dbReference type="HAMAP-Rule" id="MF_01315"/>
    </source>
</evidence>
<evidence type="ECO:0000256" key="2">
    <source>
        <dbReference type="SAM" id="MobiDB-lite"/>
    </source>
</evidence>
<evidence type="ECO:0000305" key="3"/>
<keyword id="KW-1185">Reference proteome</keyword>
<keyword id="KW-0687">Ribonucleoprotein</keyword>
<keyword id="KW-0689">Ribosomal protein</keyword>
<keyword id="KW-0694">RNA-binding</keyword>
<keyword id="KW-0699">rRNA-binding</keyword>
<keyword id="KW-0820">tRNA-binding</keyword>
<comment type="function">
    <text evidence="1">Located at the top of the head of the 30S subunit, it contacts several helices of the 16S rRNA. In the 70S ribosome it contacts the 23S rRNA (bridge B1a) and protein L5 of the 50S subunit (bridge B1b), connecting the 2 subunits; these bridges are implicated in subunit movement. Contacts the tRNAs in the A and P-sites.</text>
</comment>
<comment type="subunit">
    <text evidence="1">Part of the 30S ribosomal subunit. Forms a loose heterodimer with protein S19. Forms two bridges to the 50S subunit in the 70S ribosome.</text>
</comment>
<comment type="similarity">
    <text evidence="1">Belongs to the universal ribosomal protein uS13 family.</text>
</comment>
<dbReference type="EMBL" id="CP001191">
    <property type="protein sequence ID" value="ACI54648.1"/>
    <property type="molecule type" value="Genomic_DNA"/>
</dbReference>
<dbReference type="RefSeq" id="WP_003573772.1">
    <property type="nucleotide sequence ID" value="NC_011369.1"/>
</dbReference>
<dbReference type="SMR" id="B5ZZ55"/>
<dbReference type="STRING" id="395492.Rleg2_1354"/>
<dbReference type="GeneID" id="91148150"/>
<dbReference type="KEGG" id="rlt:Rleg2_1354"/>
<dbReference type="eggNOG" id="COG0099">
    <property type="taxonomic scope" value="Bacteria"/>
</dbReference>
<dbReference type="HOGENOM" id="CLU_103849_1_2_5"/>
<dbReference type="Proteomes" id="UP000008330">
    <property type="component" value="Chromosome"/>
</dbReference>
<dbReference type="GO" id="GO:0005829">
    <property type="term" value="C:cytosol"/>
    <property type="evidence" value="ECO:0007669"/>
    <property type="project" value="TreeGrafter"/>
</dbReference>
<dbReference type="GO" id="GO:0015935">
    <property type="term" value="C:small ribosomal subunit"/>
    <property type="evidence" value="ECO:0007669"/>
    <property type="project" value="TreeGrafter"/>
</dbReference>
<dbReference type="GO" id="GO:0019843">
    <property type="term" value="F:rRNA binding"/>
    <property type="evidence" value="ECO:0007669"/>
    <property type="project" value="UniProtKB-UniRule"/>
</dbReference>
<dbReference type="GO" id="GO:0003735">
    <property type="term" value="F:structural constituent of ribosome"/>
    <property type="evidence" value="ECO:0007669"/>
    <property type="project" value="InterPro"/>
</dbReference>
<dbReference type="GO" id="GO:0000049">
    <property type="term" value="F:tRNA binding"/>
    <property type="evidence" value="ECO:0007669"/>
    <property type="project" value="UniProtKB-UniRule"/>
</dbReference>
<dbReference type="GO" id="GO:0006412">
    <property type="term" value="P:translation"/>
    <property type="evidence" value="ECO:0007669"/>
    <property type="project" value="UniProtKB-UniRule"/>
</dbReference>
<dbReference type="FunFam" id="1.10.8.50:FF:000001">
    <property type="entry name" value="30S ribosomal protein S13"/>
    <property type="match status" value="1"/>
</dbReference>
<dbReference type="FunFam" id="4.10.910.10:FF:000001">
    <property type="entry name" value="30S ribosomal protein S13"/>
    <property type="match status" value="1"/>
</dbReference>
<dbReference type="Gene3D" id="1.10.8.50">
    <property type="match status" value="1"/>
</dbReference>
<dbReference type="Gene3D" id="4.10.910.10">
    <property type="entry name" value="30s ribosomal protein s13, domain 2"/>
    <property type="match status" value="1"/>
</dbReference>
<dbReference type="HAMAP" id="MF_01315">
    <property type="entry name" value="Ribosomal_uS13"/>
    <property type="match status" value="1"/>
</dbReference>
<dbReference type="InterPro" id="IPR027437">
    <property type="entry name" value="Rbsml_uS13_C"/>
</dbReference>
<dbReference type="InterPro" id="IPR001892">
    <property type="entry name" value="Ribosomal_uS13"/>
</dbReference>
<dbReference type="InterPro" id="IPR010979">
    <property type="entry name" value="Ribosomal_uS13-like_H2TH"/>
</dbReference>
<dbReference type="InterPro" id="IPR019980">
    <property type="entry name" value="Ribosomal_uS13_bac-type"/>
</dbReference>
<dbReference type="InterPro" id="IPR018269">
    <property type="entry name" value="Ribosomal_uS13_CS"/>
</dbReference>
<dbReference type="NCBIfam" id="TIGR03631">
    <property type="entry name" value="uS13_bact"/>
    <property type="match status" value="1"/>
</dbReference>
<dbReference type="PANTHER" id="PTHR10871">
    <property type="entry name" value="30S RIBOSOMAL PROTEIN S13/40S RIBOSOMAL PROTEIN S18"/>
    <property type="match status" value="1"/>
</dbReference>
<dbReference type="PANTHER" id="PTHR10871:SF1">
    <property type="entry name" value="SMALL RIBOSOMAL SUBUNIT PROTEIN US13M"/>
    <property type="match status" value="1"/>
</dbReference>
<dbReference type="Pfam" id="PF00416">
    <property type="entry name" value="Ribosomal_S13"/>
    <property type="match status" value="1"/>
</dbReference>
<dbReference type="PIRSF" id="PIRSF002134">
    <property type="entry name" value="Ribosomal_S13"/>
    <property type="match status" value="1"/>
</dbReference>
<dbReference type="SUPFAM" id="SSF46946">
    <property type="entry name" value="S13-like H2TH domain"/>
    <property type="match status" value="1"/>
</dbReference>
<dbReference type="PROSITE" id="PS00646">
    <property type="entry name" value="RIBOSOMAL_S13_1"/>
    <property type="match status" value="1"/>
</dbReference>
<dbReference type="PROSITE" id="PS50159">
    <property type="entry name" value="RIBOSOMAL_S13_2"/>
    <property type="match status" value="1"/>
</dbReference>
<sequence>MARIAGVNIPTAKRVVIALTYIHGIGPKFAQEIVEKVGIPAERRVHQLTDAEVLQIREAIDRDYQVEGDLRRDTAMNIKRLMDLGCYRGLRHRRGLPVRGQRTHTNARTRKGPAKAIAGKKK</sequence>
<organism>
    <name type="scientific">Rhizobium leguminosarum bv. trifolii (strain WSM2304)</name>
    <dbReference type="NCBI Taxonomy" id="395492"/>
    <lineage>
        <taxon>Bacteria</taxon>
        <taxon>Pseudomonadati</taxon>
        <taxon>Pseudomonadota</taxon>
        <taxon>Alphaproteobacteria</taxon>
        <taxon>Hyphomicrobiales</taxon>
        <taxon>Rhizobiaceae</taxon>
        <taxon>Rhizobium/Agrobacterium group</taxon>
        <taxon>Rhizobium</taxon>
    </lineage>
</organism>
<name>RS13_RHILW</name>
<feature type="chain" id="PRO_1000141307" description="Small ribosomal subunit protein uS13">
    <location>
        <begin position="1"/>
        <end position="122"/>
    </location>
</feature>
<feature type="region of interest" description="Disordered" evidence="2">
    <location>
        <begin position="99"/>
        <end position="122"/>
    </location>
</feature>
<proteinExistence type="inferred from homology"/>
<gene>
    <name evidence="1" type="primary">rpsM</name>
    <name type="ordered locus">Rleg2_1354</name>
</gene>
<reference key="1">
    <citation type="journal article" date="2010" name="Stand. Genomic Sci.">
        <title>Complete genome sequence of Rhizobium leguminosarum bv trifolii strain WSM2304, an effective microsymbiont of the South American clover Trifolium polymorphum.</title>
        <authorList>
            <person name="Reeve W."/>
            <person name="O'Hara G."/>
            <person name="Chain P."/>
            <person name="Ardley J."/>
            <person name="Brau L."/>
            <person name="Nandesena K."/>
            <person name="Tiwari R."/>
            <person name="Malfatti S."/>
            <person name="Kiss H."/>
            <person name="Lapidus A."/>
            <person name="Copeland A."/>
            <person name="Nolan M."/>
            <person name="Land M."/>
            <person name="Ivanova N."/>
            <person name="Mavromatis K."/>
            <person name="Markowitz V."/>
            <person name="Kyrpides N."/>
            <person name="Melino V."/>
            <person name="Denton M."/>
            <person name="Yates R."/>
            <person name="Howieson J."/>
        </authorList>
    </citation>
    <scope>NUCLEOTIDE SEQUENCE [LARGE SCALE GENOMIC DNA]</scope>
    <source>
        <strain>WSM2304</strain>
    </source>
</reference>